<evidence type="ECO:0000305" key="1"/>
<evidence type="ECO:0007829" key="2">
    <source>
        <dbReference type="PDB" id="1FPO"/>
    </source>
</evidence>
<gene>
    <name type="primary">hscB</name>
    <name type="synonym">yfhE</name>
    <name type="ordered locus">b2527</name>
    <name type="ordered locus">JW2511</name>
</gene>
<name>HSCB_ECOLI</name>
<organism>
    <name type="scientific">Escherichia coli (strain K12)</name>
    <dbReference type="NCBI Taxonomy" id="83333"/>
    <lineage>
        <taxon>Bacteria</taxon>
        <taxon>Pseudomonadati</taxon>
        <taxon>Pseudomonadota</taxon>
        <taxon>Gammaproteobacteria</taxon>
        <taxon>Enterobacterales</taxon>
        <taxon>Enterobacteriaceae</taxon>
        <taxon>Escherichia</taxon>
    </lineage>
</organism>
<accession>P0A6L9</accession>
<accession>P36540</accession>
<protein>
    <recommendedName>
        <fullName>Co-chaperone protein HscB</fullName>
    </recommendedName>
    <alternativeName>
        <fullName>Hsc20</fullName>
    </alternativeName>
</protein>
<proteinExistence type="evidence at protein level"/>
<comment type="function">
    <text>Co-chaperone involved in the maturation of iron-sulfur cluster-containing proteins. Seems to help targeting proteins to be folded toward HscA.</text>
</comment>
<comment type="subunit">
    <text>Interacts with HscA and stimulates its ATPase activity. Interacts with IscU.</text>
</comment>
<comment type="similarity">
    <text evidence="1">Belongs to the HscB family.</text>
</comment>
<sequence length="171" mass="20138">MDYFTLFGLPARYQLDTQALSLRFQDLQRQYHPDKFASGSQAEQLAAVQQSATINQAWQTLRHPLMRAEYLLSLHGFDLASEQHTVRDTAFLMEQLELREELDEIEQAKDEARLESFIKRVKKMFDTRHQLMVEQLDNETWDAAADTVRKLRFLDKLRSSAEQLEEKLLDF</sequence>
<feature type="chain" id="PRO_0000070966" description="Co-chaperone protein HscB">
    <location>
        <begin position="1"/>
        <end position="171"/>
    </location>
</feature>
<feature type="domain" description="J">
    <location>
        <begin position="2"/>
        <end position="74"/>
    </location>
</feature>
<feature type="helix" evidence="2">
    <location>
        <begin position="2"/>
        <end position="6"/>
    </location>
</feature>
<feature type="strand" evidence="2">
    <location>
        <begin position="11"/>
        <end position="13"/>
    </location>
</feature>
<feature type="helix" evidence="2">
    <location>
        <begin position="17"/>
        <end position="30"/>
    </location>
</feature>
<feature type="helix" evidence="2">
    <location>
        <begin position="33"/>
        <end position="36"/>
    </location>
</feature>
<feature type="helix" evidence="2">
    <location>
        <begin position="41"/>
        <end position="62"/>
    </location>
</feature>
<feature type="helix" evidence="2">
    <location>
        <begin position="64"/>
        <end position="73"/>
    </location>
</feature>
<feature type="turn" evidence="2">
    <location>
        <begin position="74"/>
        <end position="76"/>
    </location>
</feature>
<feature type="strand" evidence="2">
    <location>
        <begin position="82"/>
        <end position="84"/>
    </location>
</feature>
<feature type="helix" evidence="2">
    <location>
        <begin position="89"/>
        <end position="108"/>
    </location>
</feature>
<feature type="helix" evidence="2">
    <location>
        <begin position="111"/>
        <end position="137"/>
    </location>
</feature>
<feature type="helix" evidence="2">
    <location>
        <begin position="141"/>
        <end position="165"/>
    </location>
</feature>
<feature type="turn" evidence="2">
    <location>
        <begin position="166"/>
        <end position="169"/>
    </location>
</feature>
<keyword id="KW-0002">3D-structure</keyword>
<keyword id="KW-0143">Chaperone</keyword>
<keyword id="KW-1185">Reference proteome</keyword>
<dbReference type="EMBL" id="U01827">
    <property type="protein sequence ID" value="AAA18299.1"/>
    <property type="molecule type" value="Unassigned_DNA"/>
</dbReference>
<dbReference type="EMBL" id="U00096">
    <property type="protein sequence ID" value="AAC75580.1"/>
    <property type="molecule type" value="Genomic_DNA"/>
</dbReference>
<dbReference type="EMBL" id="AP009048">
    <property type="protein sequence ID" value="BAA16421.1"/>
    <property type="molecule type" value="Genomic_DNA"/>
</dbReference>
<dbReference type="EMBL" id="U05338">
    <property type="status" value="NOT_ANNOTATED_CDS"/>
    <property type="molecule type" value="Genomic_DNA"/>
</dbReference>
<dbReference type="PIR" id="A36958">
    <property type="entry name" value="A36958"/>
</dbReference>
<dbReference type="RefSeq" id="NP_417022.1">
    <property type="nucleotide sequence ID" value="NC_000913.3"/>
</dbReference>
<dbReference type="RefSeq" id="WP_000384413.1">
    <property type="nucleotide sequence ID" value="NZ_STEB01000011.1"/>
</dbReference>
<dbReference type="PDB" id="1FPO">
    <property type="method" value="X-ray"/>
    <property type="resolution" value="1.80 A"/>
    <property type="chains" value="A/B/C=1-171"/>
</dbReference>
<dbReference type="PDBsum" id="1FPO"/>
<dbReference type="SMR" id="P0A6L9"/>
<dbReference type="BioGRID" id="4263037">
    <property type="interactions" value="44"/>
</dbReference>
<dbReference type="BioGRID" id="851334">
    <property type="interactions" value="3"/>
</dbReference>
<dbReference type="DIP" id="DIP-47847N"/>
<dbReference type="FunCoup" id="P0A6L9">
    <property type="interactions" value="458"/>
</dbReference>
<dbReference type="IntAct" id="P0A6L9">
    <property type="interactions" value="21"/>
</dbReference>
<dbReference type="STRING" id="511145.b2527"/>
<dbReference type="jPOST" id="P0A6L9"/>
<dbReference type="PaxDb" id="511145-b2527"/>
<dbReference type="EnsemblBacteria" id="AAC75580">
    <property type="protein sequence ID" value="AAC75580"/>
    <property type="gene ID" value="b2527"/>
</dbReference>
<dbReference type="GeneID" id="75172640"/>
<dbReference type="GeneID" id="946995"/>
<dbReference type="KEGG" id="ecj:JW2511"/>
<dbReference type="KEGG" id="eco:b2527"/>
<dbReference type="KEGG" id="ecoc:C3026_14005"/>
<dbReference type="PATRIC" id="fig|1411691.4.peg.4207"/>
<dbReference type="EchoBASE" id="EB2052"/>
<dbReference type="eggNOG" id="COG1076">
    <property type="taxonomic scope" value="Bacteria"/>
</dbReference>
<dbReference type="HOGENOM" id="CLU_068529_2_0_6"/>
<dbReference type="InParanoid" id="P0A6L9"/>
<dbReference type="OMA" id="LMFIERF"/>
<dbReference type="OrthoDB" id="287587at2"/>
<dbReference type="PhylomeDB" id="P0A6L9"/>
<dbReference type="BioCyc" id="EcoCyc:EG12131-MONOMER"/>
<dbReference type="BioCyc" id="MetaCyc:EG12131-MONOMER"/>
<dbReference type="EvolutionaryTrace" id="P0A6L9"/>
<dbReference type="PRO" id="PR:P0A6L9"/>
<dbReference type="Proteomes" id="UP000000625">
    <property type="component" value="Chromosome"/>
</dbReference>
<dbReference type="GO" id="GO:0005829">
    <property type="term" value="C:cytosol"/>
    <property type="evidence" value="ECO:0000314"/>
    <property type="project" value="EcoCyc"/>
</dbReference>
<dbReference type="GO" id="GO:1990230">
    <property type="term" value="C:iron-sulfur cluster transfer complex"/>
    <property type="evidence" value="ECO:0000314"/>
    <property type="project" value="EcoCyc"/>
</dbReference>
<dbReference type="GO" id="GO:0001671">
    <property type="term" value="F:ATPase activator activity"/>
    <property type="evidence" value="ECO:0007669"/>
    <property type="project" value="InterPro"/>
</dbReference>
<dbReference type="GO" id="GO:0051087">
    <property type="term" value="F:protein-folding chaperone binding"/>
    <property type="evidence" value="ECO:0007669"/>
    <property type="project" value="InterPro"/>
</dbReference>
<dbReference type="GO" id="GO:0044571">
    <property type="term" value="P:[2Fe-2S] cluster assembly"/>
    <property type="evidence" value="ECO:0007669"/>
    <property type="project" value="InterPro"/>
</dbReference>
<dbReference type="GO" id="GO:0051259">
    <property type="term" value="P:protein complex oligomerization"/>
    <property type="evidence" value="ECO:0007669"/>
    <property type="project" value="InterPro"/>
</dbReference>
<dbReference type="GO" id="GO:0006457">
    <property type="term" value="P:protein folding"/>
    <property type="evidence" value="ECO:0007669"/>
    <property type="project" value="UniProtKB-UniRule"/>
</dbReference>
<dbReference type="CDD" id="cd06257">
    <property type="entry name" value="DnaJ"/>
    <property type="match status" value="1"/>
</dbReference>
<dbReference type="FunFam" id="1.10.287.110:FF:000008">
    <property type="entry name" value="Co-chaperone protein HscB"/>
    <property type="match status" value="1"/>
</dbReference>
<dbReference type="FunFam" id="1.20.1280.20:FF:000001">
    <property type="entry name" value="Co-chaperone protein HscB"/>
    <property type="match status" value="1"/>
</dbReference>
<dbReference type="Gene3D" id="1.10.287.110">
    <property type="entry name" value="DnaJ domain"/>
    <property type="match status" value="1"/>
</dbReference>
<dbReference type="Gene3D" id="1.20.1280.20">
    <property type="entry name" value="HscB, C-terminal domain"/>
    <property type="match status" value="1"/>
</dbReference>
<dbReference type="HAMAP" id="MF_00682">
    <property type="entry name" value="HscB"/>
    <property type="match status" value="1"/>
</dbReference>
<dbReference type="InterPro" id="IPR001623">
    <property type="entry name" value="DnaJ_domain"/>
</dbReference>
<dbReference type="InterPro" id="IPR004640">
    <property type="entry name" value="HscB"/>
</dbReference>
<dbReference type="InterPro" id="IPR036386">
    <property type="entry name" value="HscB_C_sf"/>
</dbReference>
<dbReference type="InterPro" id="IPR009073">
    <property type="entry name" value="HscB_oligo_C"/>
</dbReference>
<dbReference type="InterPro" id="IPR036869">
    <property type="entry name" value="J_dom_sf"/>
</dbReference>
<dbReference type="NCBIfam" id="TIGR00714">
    <property type="entry name" value="hscB"/>
    <property type="match status" value="1"/>
</dbReference>
<dbReference type="NCBIfam" id="NF003449">
    <property type="entry name" value="PRK05014.1"/>
    <property type="match status" value="1"/>
</dbReference>
<dbReference type="PANTHER" id="PTHR14021">
    <property type="entry name" value="IRON-SULFUR CLUSTER CO-CHAPERONE PROTEIN HSCB"/>
    <property type="match status" value="1"/>
</dbReference>
<dbReference type="PANTHER" id="PTHR14021:SF15">
    <property type="entry name" value="IRON-SULFUR CLUSTER CO-CHAPERONE PROTEIN HSCB"/>
    <property type="match status" value="1"/>
</dbReference>
<dbReference type="Pfam" id="PF07743">
    <property type="entry name" value="HSCB_C"/>
    <property type="match status" value="1"/>
</dbReference>
<dbReference type="SMART" id="SM00271">
    <property type="entry name" value="DnaJ"/>
    <property type="match status" value="1"/>
</dbReference>
<dbReference type="SUPFAM" id="SSF46565">
    <property type="entry name" value="Chaperone J-domain"/>
    <property type="match status" value="1"/>
</dbReference>
<dbReference type="SUPFAM" id="SSF47144">
    <property type="entry name" value="HSC20 (HSCB), C-terminal oligomerisation domain"/>
    <property type="match status" value="1"/>
</dbReference>
<dbReference type="PROSITE" id="PS50076">
    <property type="entry name" value="DNAJ_2"/>
    <property type="match status" value="1"/>
</dbReference>
<reference key="1">
    <citation type="journal article" date="1994" name="J. Bacteriol.">
        <title>Mutations in a gene encoding a new Hsp70 suppress rapid DNA inversion and bgl activation, but not proU derepression, in hns-1 mutant Escherichia coli.</title>
        <authorList>
            <person name="Kawula T.H."/>
            <person name="Lelivelt M.J."/>
        </authorList>
    </citation>
    <scope>NUCLEOTIDE SEQUENCE [GENOMIC DNA]</scope>
    <source>
        <strain>K12</strain>
    </source>
</reference>
<reference key="2">
    <citation type="journal article" date="1997" name="DNA Res.">
        <title>Construction of a contiguous 874-kb sequence of the Escherichia coli-K12 genome corresponding to 50.0-68.8 min on the linkage map and analysis of its sequence features.</title>
        <authorList>
            <person name="Yamamoto Y."/>
            <person name="Aiba H."/>
            <person name="Baba T."/>
            <person name="Hayashi K."/>
            <person name="Inada T."/>
            <person name="Isono K."/>
            <person name="Itoh T."/>
            <person name="Kimura S."/>
            <person name="Kitagawa M."/>
            <person name="Makino K."/>
            <person name="Miki T."/>
            <person name="Mitsuhashi N."/>
            <person name="Mizobuchi K."/>
            <person name="Mori H."/>
            <person name="Nakade S."/>
            <person name="Nakamura Y."/>
            <person name="Nashimoto H."/>
            <person name="Oshima T."/>
            <person name="Oyama S."/>
            <person name="Saito N."/>
            <person name="Sampei G."/>
            <person name="Satoh Y."/>
            <person name="Sivasundaram S."/>
            <person name="Tagami H."/>
            <person name="Takahashi H."/>
            <person name="Takeda J."/>
            <person name="Takemoto K."/>
            <person name="Uehara K."/>
            <person name="Wada C."/>
            <person name="Yamagata S."/>
            <person name="Horiuchi T."/>
        </authorList>
    </citation>
    <scope>NUCLEOTIDE SEQUENCE [LARGE SCALE GENOMIC DNA]</scope>
    <source>
        <strain>K12 / W3110 / ATCC 27325 / DSM 5911</strain>
    </source>
</reference>
<reference key="3">
    <citation type="journal article" date="1997" name="Science">
        <title>The complete genome sequence of Escherichia coli K-12.</title>
        <authorList>
            <person name="Blattner F.R."/>
            <person name="Plunkett G. III"/>
            <person name="Bloch C.A."/>
            <person name="Perna N.T."/>
            <person name="Burland V."/>
            <person name="Riley M."/>
            <person name="Collado-Vides J."/>
            <person name="Glasner J.D."/>
            <person name="Rode C.K."/>
            <person name="Mayhew G.F."/>
            <person name="Gregor J."/>
            <person name="Davis N.W."/>
            <person name="Kirkpatrick H.A."/>
            <person name="Goeden M.A."/>
            <person name="Rose D.J."/>
            <person name="Mau B."/>
            <person name="Shao Y."/>
        </authorList>
    </citation>
    <scope>NUCLEOTIDE SEQUENCE [LARGE SCALE GENOMIC DNA]</scope>
    <source>
        <strain>K12 / MG1655 / ATCC 47076</strain>
    </source>
</reference>
<reference key="4">
    <citation type="journal article" date="2006" name="Mol. Syst. Biol.">
        <title>Highly accurate genome sequences of Escherichia coli K-12 strains MG1655 and W3110.</title>
        <authorList>
            <person name="Hayashi K."/>
            <person name="Morooka N."/>
            <person name="Yamamoto Y."/>
            <person name="Fujita K."/>
            <person name="Isono K."/>
            <person name="Choi S."/>
            <person name="Ohtsubo E."/>
            <person name="Baba T."/>
            <person name="Wanner B.L."/>
            <person name="Mori H."/>
            <person name="Horiuchi T."/>
        </authorList>
    </citation>
    <scope>NUCLEOTIDE SEQUENCE [LARGE SCALE GENOMIC DNA]</scope>
    <source>
        <strain>K12 / W3110 / ATCC 27325 / DSM 5911</strain>
    </source>
</reference>
<reference key="5">
    <citation type="journal article" date="1994" name="Proc. Natl. Acad. Sci. U.S.A.">
        <title>A gene encoding a DnaK/hsp70 homolog in Escherichia coli.</title>
        <authorList>
            <person name="Seaton B.L."/>
            <person name="Vickery L.E."/>
        </authorList>
    </citation>
    <scope>NUCLEOTIDE SEQUENCE [GENOMIC DNA] OF 119-171</scope>
    <source>
        <strain>B</strain>
    </source>
</reference>
<reference key="6">
    <citation type="journal article" date="1997" name="Protein Sci.">
        <title>Hsc66 and Hsc20, a new heat shock cognate molecular chaperone system from Escherichia coli.</title>
        <authorList>
            <person name="Vickery L.E."/>
            <person name="Silberg J.J."/>
            <person name="Ta D.T."/>
        </authorList>
    </citation>
    <scope>CHARACTERIZATION</scope>
</reference>
<reference key="7">
    <citation type="journal article" date="2000" name="Proc. Natl. Acad. Sci. U.S.A.">
        <title>Interaction of the iron-sulfur cluster assembly protein IscU with the Hsc66/Hsc20 molecular chaperone system of Escherichia coli.</title>
        <authorList>
            <person name="Hoff K.G."/>
            <person name="Silberg J.J."/>
            <person name="Vickery L.E."/>
        </authorList>
    </citation>
    <scope>CHARACTERIZATION</scope>
</reference>
<reference key="8">
    <citation type="journal article" date="1997" name="Protein Sci.">
        <title>Crystallization and preliminary X-ray crystallographic properties of Hsc20, a J-motif co-chaperone protein from Escherichia coli.</title>
        <authorList>
            <person name="Cupp-Vickery J.R."/>
            <person name="Vickery L.E."/>
        </authorList>
    </citation>
    <scope>CRYSTALLIZATION</scope>
</reference>
<reference key="9">
    <citation type="journal article" date="2000" name="J. Mol. Biol.">
        <title>Crystal structure of Hsc20, a J-type co-chaperone from Escherichia coli.</title>
        <authorList>
            <person name="Cupp-Vickery J.R."/>
            <person name="Vickery L.E."/>
        </authorList>
    </citation>
    <scope>X-RAY CRYSTALLOGRAPHY (1.8 ANGSTROMS)</scope>
</reference>